<evidence type="ECO:0000255" key="1">
    <source>
        <dbReference type="HAMAP-Rule" id="MF_00747"/>
    </source>
</evidence>
<name>ACEK_RHOP2</name>
<feature type="chain" id="PRO_0000288300" description="Isocitrate dehydrogenase kinase/phosphatase">
    <location>
        <begin position="1"/>
        <end position="605"/>
    </location>
</feature>
<feature type="active site" evidence="1">
    <location>
        <position position="413"/>
    </location>
</feature>
<feature type="binding site" evidence="1">
    <location>
        <begin position="353"/>
        <end position="359"/>
    </location>
    <ligand>
        <name>ATP</name>
        <dbReference type="ChEBI" id="CHEBI:30616"/>
    </ligand>
</feature>
<feature type="binding site" evidence="1">
    <location>
        <position position="374"/>
    </location>
    <ligand>
        <name>ATP</name>
        <dbReference type="ChEBI" id="CHEBI:30616"/>
    </ligand>
</feature>
<proteinExistence type="inferred from homology"/>
<organism>
    <name type="scientific">Rhodopseudomonas palustris (strain HaA2)</name>
    <dbReference type="NCBI Taxonomy" id="316058"/>
    <lineage>
        <taxon>Bacteria</taxon>
        <taxon>Pseudomonadati</taxon>
        <taxon>Pseudomonadota</taxon>
        <taxon>Alphaproteobacteria</taxon>
        <taxon>Hyphomicrobiales</taxon>
        <taxon>Nitrobacteraceae</taxon>
        <taxon>Rhodopseudomonas</taxon>
    </lineage>
</organism>
<comment type="function">
    <text evidence="1">Bifunctional enzyme which can phosphorylate or dephosphorylate isocitrate dehydrogenase (IDH) on a specific serine residue. This is a regulatory mechanism which enables bacteria to bypass the Krebs cycle via the glyoxylate shunt in response to the source of carbon. When bacteria are grown on glucose, IDH is fully active and unphosphorylated, but when grown on acetate or ethanol, the activity of IDH declines drastically concomitant with its phosphorylation.</text>
</comment>
<comment type="catalytic activity">
    <reaction evidence="1">
        <text>L-seryl-[isocitrate dehydrogenase] + ATP = O-phospho-L-seryl-[isocitrate dehydrogenase] + ADP + H(+)</text>
        <dbReference type="Rhea" id="RHEA:43540"/>
        <dbReference type="Rhea" id="RHEA-COMP:10605"/>
        <dbReference type="Rhea" id="RHEA-COMP:10606"/>
        <dbReference type="ChEBI" id="CHEBI:15378"/>
        <dbReference type="ChEBI" id="CHEBI:29999"/>
        <dbReference type="ChEBI" id="CHEBI:30616"/>
        <dbReference type="ChEBI" id="CHEBI:83421"/>
        <dbReference type="ChEBI" id="CHEBI:456216"/>
        <dbReference type="EC" id="2.7.11.5"/>
    </reaction>
</comment>
<comment type="subcellular location">
    <subcellularLocation>
        <location evidence="1">Cytoplasm</location>
    </subcellularLocation>
</comment>
<comment type="similarity">
    <text evidence="1">Belongs to the AceK family.</text>
</comment>
<sequence>MTATRHPFASDIDAATRIAEPDFDLLDALVRTDDPDDQAHTLARVVLAAFDNYYAVSRRIPALAQAAFEARDWAATVRLSKIRLGLYTACIDQLVPLLKAGLPELANDEQLWARAEAELLAAIAERYEADFAFAFWQSLRRKLVSDEWRPVSYDTGPAARPKATSAAILKTIATTLPIRPAVIRDILDGAGLRGPWRDRDGDAALAAAAIEAALEPLGPRAGETAKIEIAESGFFRNRGACLVGRVRLRDRGDMPMRNLPLLIALLNEDDGLVVDAVLCDADELQYAFSSTLANYHATNPHYHELARLLHELMPKRPLGTQYSCIGFHHLGKVAVMTEILAEHRRSKEKLDTAPGFKGTVAIAFTMPSSAYVLKIIRDHPTDDYKFDYFDGLDAVLRKYNLVHEIDRAGSMLDNIIYSNVKLERTMFAPDLLDELLESGIDTVTLERGALVFRHLIVQIKLTPLPLYLTTASAADARAAVINLGDCIKNNAAADIFNKDLDGRNYGVSRIRKVYLFDYDAVEPLTDVRVRGDDAPPGPEFEDGVVFRPADMLGGLRIDDPALRRAFRDAHPELMQPEYWQGMQRALRAGKVPRVMNYPAARRLRR</sequence>
<gene>
    <name evidence="1" type="primary">aceK</name>
    <name type="ordered locus">RPB_0473</name>
</gene>
<accession>Q2J2X6</accession>
<keyword id="KW-0067">ATP-binding</keyword>
<keyword id="KW-0963">Cytoplasm</keyword>
<keyword id="KW-0329">Glyoxylate bypass</keyword>
<keyword id="KW-0378">Hydrolase</keyword>
<keyword id="KW-0418">Kinase</keyword>
<keyword id="KW-0547">Nucleotide-binding</keyword>
<keyword id="KW-0904">Protein phosphatase</keyword>
<keyword id="KW-1185">Reference proteome</keyword>
<keyword id="KW-0723">Serine/threonine-protein kinase</keyword>
<keyword id="KW-0808">Transferase</keyword>
<keyword id="KW-0816">Tricarboxylic acid cycle</keyword>
<protein>
    <recommendedName>
        <fullName evidence="1">Isocitrate dehydrogenase kinase/phosphatase</fullName>
        <shortName evidence="1">IDH kinase/phosphatase</shortName>
        <shortName evidence="1">IDHK/P</shortName>
        <ecNumber evidence="1">2.7.11.5</ecNumber>
        <ecNumber evidence="1">3.1.3.-</ecNumber>
    </recommendedName>
</protein>
<reference key="1">
    <citation type="submission" date="2006-01" db="EMBL/GenBank/DDBJ databases">
        <title>Complete sequence of Rhodopseudomonas palustris HaA2.</title>
        <authorList>
            <consortium name="US DOE Joint Genome Institute"/>
            <person name="Copeland A."/>
            <person name="Lucas S."/>
            <person name="Lapidus A."/>
            <person name="Barry K."/>
            <person name="Detter J.C."/>
            <person name="Glavina T."/>
            <person name="Hammon N."/>
            <person name="Israni S."/>
            <person name="Pitluck S."/>
            <person name="Chain P."/>
            <person name="Malfatti S."/>
            <person name="Shin M."/>
            <person name="Vergez L."/>
            <person name="Schmutz J."/>
            <person name="Larimer F."/>
            <person name="Land M."/>
            <person name="Hauser L."/>
            <person name="Pelletier D.A."/>
            <person name="Kyrpides N."/>
            <person name="Anderson I."/>
            <person name="Oda Y."/>
            <person name="Harwood C.S."/>
            <person name="Richardson P."/>
        </authorList>
    </citation>
    <scope>NUCLEOTIDE SEQUENCE [LARGE SCALE GENOMIC DNA]</scope>
    <source>
        <strain>HaA2</strain>
    </source>
</reference>
<dbReference type="EC" id="2.7.11.5" evidence="1"/>
<dbReference type="EC" id="3.1.3.-" evidence="1"/>
<dbReference type="EMBL" id="CP000250">
    <property type="protein sequence ID" value="ABD05184.1"/>
    <property type="molecule type" value="Genomic_DNA"/>
</dbReference>
<dbReference type="RefSeq" id="WP_011439374.1">
    <property type="nucleotide sequence ID" value="NC_007778.1"/>
</dbReference>
<dbReference type="SMR" id="Q2J2X6"/>
<dbReference type="STRING" id="316058.RPB_0473"/>
<dbReference type="KEGG" id="rpb:RPB_0473"/>
<dbReference type="eggNOG" id="COG4579">
    <property type="taxonomic scope" value="Bacteria"/>
</dbReference>
<dbReference type="HOGENOM" id="CLU_033804_1_1_5"/>
<dbReference type="OrthoDB" id="5287793at2"/>
<dbReference type="Proteomes" id="UP000008809">
    <property type="component" value="Chromosome"/>
</dbReference>
<dbReference type="GO" id="GO:0005737">
    <property type="term" value="C:cytoplasm"/>
    <property type="evidence" value="ECO:0007669"/>
    <property type="project" value="UniProtKB-SubCell"/>
</dbReference>
<dbReference type="GO" id="GO:0008772">
    <property type="term" value="F:[isocitrate dehydrogenase (NADP+)] kinase activity"/>
    <property type="evidence" value="ECO:0007669"/>
    <property type="project" value="UniProtKB-UniRule"/>
</dbReference>
<dbReference type="GO" id="GO:0016208">
    <property type="term" value="F:AMP binding"/>
    <property type="evidence" value="ECO:0007669"/>
    <property type="project" value="TreeGrafter"/>
</dbReference>
<dbReference type="GO" id="GO:0005524">
    <property type="term" value="F:ATP binding"/>
    <property type="evidence" value="ECO:0007669"/>
    <property type="project" value="UniProtKB-UniRule"/>
</dbReference>
<dbReference type="GO" id="GO:0004721">
    <property type="term" value="F:phosphoprotein phosphatase activity"/>
    <property type="evidence" value="ECO:0007669"/>
    <property type="project" value="UniProtKB-KW"/>
</dbReference>
<dbReference type="GO" id="GO:0004674">
    <property type="term" value="F:protein serine/threonine kinase activity"/>
    <property type="evidence" value="ECO:0007669"/>
    <property type="project" value="UniProtKB-KW"/>
</dbReference>
<dbReference type="GO" id="GO:0006006">
    <property type="term" value="P:glucose metabolic process"/>
    <property type="evidence" value="ECO:0007669"/>
    <property type="project" value="InterPro"/>
</dbReference>
<dbReference type="GO" id="GO:0006097">
    <property type="term" value="P:glyoxylate cycle"/>
    <property type="evidence" value="ECO:0007669"/>
    <property type="project" value="UniProtKB-UniRule"/>
</dbReference>
<dbReference type="GO" id="GO:0006099">
    <property type="term" value="P:tricarboxylic acid cycle"/>
    <property type="evidence" value="ECO:0007669"/>
    <property type="project" value="UniProtKB-UniRule"/>
</dbReference>
<dbReference type="HAMAP" id="MF_00747">
    <property type="entry name" value="AceK"/>
    <property type="match status" value="1"/>
</dbReference>
<dbReference type="InterPro" id="IPR046855">
    <property type="entry name" value="AceK_kinase"/>
</dbReference>
<dbReference type="InterPro" id="IPR046854">
    <property type="entry name" value="AceK_regulatory"/>
</dbReference>
<dbReference type="InterPro" id="IPR010452">
    <property type="entry name" value="Isocitrate_DH_AceK"/>
</dbReference>
<dbReference type="NCBIfam" id="NF002804">
    <property type="entry name" value="PRK02946.1"/>
    <property type="match status" value="1"/>
</dbReference>
<dbReference type="PANTHER" id="PTHR39559">
    <property type="match status" value="1"/>
</dbReference>
<dbReference type="PANTHER" id="PTHR39559:SF1">
    <property type="entry name" value="ISOCITRATE DEHYDROGENASE KINASE_PHOSPHATASE"/>
    <property type="match status" value="1"/>
</dbReference>
<dbReference type="Pfam" id="PF06315">
    <property type="entry name" value="AceK_kinase"/>
    <property type="match status" value="1"/>
</dbReference>
<dbReference type="Pfam" id="PF20423">
    <property type="entry name" value="AceK_regulatory"/>
    <property type="match status" value="1"/>
</dbReference>
<dbReference type="PIRSF" id="PIRSF000719">
    <property type="entry name" value="AceK"/>
    <property type="match status" value="1"/>
</dbReference>